<name>IP5P6_ARATH</name>
<accession>Q9LR47</accession>
<proteinExistence type="evidence at protein level"/>
<reference key="1">
    <citation type="journal article" date="2000" name="Nature">
        <title>Sequence and analysis of chromosome 1 of the plant Arabidopsis thaliana.</title>
        <authorList>
            <person name="Theologis A."/>
            <person name="Ecker J.R."/>
            <person name="Palm C.J."/>
            <person name="Federspiel N.A."/>
            <person name="Kaul S."/>
            <person name="White O."/>
            <person name="Alonso J."/>
            <person name="Altafi H."/>
            <person name="Araujo R."/>
            <person name="Bowman C.L."/>
            <person name="Brooks S.Y."/>
            <person name="Buehler E."/>
            <person name="Chan A."/>
            <person name="Chao Q."/>
            <person name="Chen H."/>
            <person name="Cheuk R.F."/>
            <person name="Chin C.W."/>
            <person name="Chung M.K."/>
            <person name="Conn L."/>
            <person name="Conway A.B."/>
            <person name="Conway A.R."/>
            <person name="Creasy T.H."/>
            <person name="Dewar K."/>
            <person name="Dunn P."/>
            <person name="Etgu P."/>
            <person name="Feldblyum T.V."/>
            <person name="Feng J.-D."/>
            <person name="Fong B."/>
            <person name="Fujii C.Y."/>
            <person name="Gill J.E."/>
            <person name="Goldsmith A.D."/>
            <person name="Haas B."/>
            <person name="Hansen N.F."/>
            <person name="Hughes B."/>
            <person name="Huizar L."/>
            <person name="Hunter J.L."/>
            <person name="Jenkins J."/>
            <person name="Johnson-Hopson C."/>
            <person name="Khan S."/>
            <person name="Khaykin E."/>
            <person name="Kim C.J."/>
            <person name="Koo H.L."/>
            <person name="Kremenetskaia I."/>
            <person name="Kurtz D.B."/>
            <person name="Kwan A."/>
            <person name="Lam B."/>
            <person name="Langin-Hooper S."/>
            <person name="Lee A."/>
            <person name="Lee J.M."/>
            <person name="Lenz C.A."/>
            <person name="Li J.H."/>
            <person name="Li Y.-P."/>
            <person name="Lin X."/>
            <person name="Liu S.X."/>
            <person name="Liu Z.A."/>
            <person name="Luros J.S."/>
            <person name="Maiti R."/>
            <person name="Marziali A."/>
            <person name="Militscher J."/>
            <person name="Miranda M."/>
            <person name="Nguyen M."/>
            <person name="Nierman W.C."/>
            <person name="Osborne B.I."/>
            <person name="Pai G."/>
            <person name="Peterson J."/>
            <person name="Pham P.K."/>
            <person name="Rizzo M."/>
            <person name="Rooney T."/>
            <person name="Rowley D."/>
            <person name="Sakano H."/>
            <person name="Salzberg S.L."/>
            <person name="Schwartz J.R."/>
            <person name="Shinn P."/>
            <person name="Southwick A.M."/>
            <person name="Sun H."/>
            <person name="Tallon L.J."/>
            <person name="Tambunga G."/>
            <person name="Toriumi M.J."/>
            <person name="Town C.D."/>
            <person name="Utterback T."/>
            <person name="Van Aken S."/>
            <person name="Vaysberg M."/>
            <person name="Vysotskaia V.S."/>
            <person name="Walker M."/>
            <person name="Wu D."/>
            <person name="Yu G."/>
            <person name="Fraser C.M."/>
            <person name="Venter J.C."/>
            <person name="Davis R.W."/>
        </authorList>
    </citation>
    <scope>NUCLEOTIDE SEQUENCE [LARGE SCALE GENOMIC DNA]</scope>
    <source>
        <strain>cv. Columbia</strain>
    </source>
</reference>
<reference key="2">
    <citation type="journal article" date="2017" name="Plant J.">
        <title>Araport11: a complete reannotation of the Arabidopsis thaliana reference genome.</title>
        <authorList>
            <person name="Cheng C.Y."/>
            <person name="Krishnakumar V."/>
            <person name="Chan A.P."/>
            <person name="Thibaud-Nissen F."/>
            <person name="Schobel S."/>
            <person name="Town C.D."/>
        </authorList>
    </citation>
    <scope>GENOME REANNOTATION</scope>
    <source>
        <strain>cv. Columbia</strain>
    </source>
</reference>
<reference key="3">
    <citation type="journal article" date="2004" name="Genome Res.">
        <title>Whole genome sequence comparisons and 'full-length' cDNA sequences: a combined approach to evaluate and improve Arabidopsis genome annotation.</title>
        <authorList>
            <person name="Castelli V."/>
            <person name="Aury J.-M."/>
            <person name="Jaillon O."/>
            <person name="Wincker P."/>
            <person name="Clepet C."/>
            <person name="Menard M."/>
            <person name="Cruaud C."/>
            <person name="Quetier F."/>
            <person name="Scarpelli C."/>
            <person name="Schaechter V."/>
            <person name="Temple G."/>
            <person name="Caboche M."/>
            <person name="Weissenbach J."/>
            <person name="Salanoubat M."/>
        </authorList>
    </citation>
    <scope>NUCLEOTIDE SEQUENCE [LARGE SCALE MRNA] (ISOFORM 2)</scope>
    <source>
        <strain>cv. Columbia</strain>
    </source>
</reference>
<reference key="4">
    <citation type="journal article" date="1999" name="Plant Cell">
        <title>Genetic regulation of vascular tissue patterning in Arabidopsis.</title>
        <authorList>
            <person name="Carland F.M."/>
            <person name="Berg B.L."/>
            <person name="FitzGerald J.N."/>
            <person name="Jinamornphongs S."/>
            <person name="Nelson T."/>
            <person name="Keith B."/>
        </authorList>
    </citation>
    <scope>FUNCTION</scope>
    <scope>MUTANT CVP2-1</scope>
</reference>
<reference key="5">
    <citation type="journal article" date="2001" name="Plant Physiol.">
        <title>Molecular characterization of At5PTase1, an inositol phosphatase capable of terminating inositol trisphosphate signaling.</title>
        <authorList>
            <person name="Berdy S.E."/>
            <person name="Kudla J."/>
            <person name="Gruissem W."/>
            <person name="Gillaspy G.E."/>
        </authorList>
    </citation>
    <scope>GENE FAMILY</scope>
</reference>
<reference key="6">
    <citation type="journal article" date="2004" name="Plant Cell">
        <title>COTYLEDON VASCULAR PATTERN2-mediated inositol (1,4,5) triphosphate signal transduction is essential for closed venation patterns of Arabidopsis foliar organs.</title>
        <authorList>
            <person name="Carland F.M."/>
            <person name="Nelson T."/>
        </authorList>
    </citation>
    <scope>FUNCTION</scope>
    <scope>DEVELOPMENTAL STAGE</scope>
    <scope>TISSUE SPECIFICITY</scope>
    <scope>MUTAGENESIS OF ALA-543 AND GLY-575</scope>
</reference>
<reference key="7">
    <citation type="journal article" date="2009" name="Development">
        <title>Phosphoinositide-dependent regulation of VAN3 ARF-GAP localization and activity essential for vascular tissue continuity in plants.</title>
        <authorList>
            <person name="Naramoto S."/>
            <person name="Sawa S."/>
            <person name="Koizumi K."/>
            <person name="Uemura T."/>
            <person name="Ueda T."/>
            <person name="Friml J."/>
            <person name="Nakano A."/>
            <person name="Fukuda H."/>
        </authorList>
    </citation>
    <scope>FUNCTION</scope>
</reference>
<reference key="8">
    <citation type="journal article" date="2009" name="Plant J.">
        <title>CVP2- and CVL1-mediated phosphoinositide signaling as a regulator of the ARF GAP SFC/VAN3 in establishment of foliar vein patterns.</title>
        <authorList>
            <person name="Carland F."/>
            <person name="Nelson T."/>
        </authorList>
    </citation>
    <scope>FUNCTION</scope>
    <scope>TISSUE SPECIFICITY</scope>
    <scope>DEVELOPMENTAL STAGE</scope>
    <scope>CATALYTIC ACTIVITY</scope>
</reference>
<reference key="9">
    <citation type="journal article" date="2015" name="Development">
        <title>Primary root protophloem differentiation requires balanced phosphatidylinositol-4,5-biphosphate levels and systemically affects root branching.</title>
        <authorList>
            <person name="Rodriguez-Villalon A."/>
            <person name="Gujas B."/>
            <person name="van Wijk R."/>
            <person name="Munnik T."/>
            <person name="Hardtke C.S."/>
        </authorList>
    </citation>
    <scope>FUNCTION</scope>
</reference>
<gene>
    <name evidence="9" type="primary">IP5P6</name>
    <name evidence="8" type="synonym">CVP2</name>
    <name evidence="10" type="ordered locus">At1g05470</name>
    <name evidence="11" type="ORF">T25N20.12</name>
</gene>
<dbReference type="EC" id="3.1.3.36" evidence="6"/>
<dbReference type="EC" id="3.1.3.86" evidence="6"/>
<dbReference type="EMBL" id="AC005106">
    <property type="protein sequence ID" value="AAF79735.1"/>
    <property type="status" value="ALT_SEQ"/>
    <property type="molecule type" value="Genomic_DNA"/>
</dbReference>
<dbReference type="EMBL" id="CP002684">
    <property type="protein sequence ID" value="AEE27844.1"/>
    <property type="molecule type" value="Genomic_DNA"/>
</dbReference>
<dbReference type="EMBL" id="CP002684">
    <property type="protein sequence ID" value="ANM59756.1"/>
    <property type="molecule type" value="Genomic_DNA"/>
</dbReference>
<dbReference type="EMBL" id="BX816898">
    <property type="status" value="NOT_ANNOTATED_CDS"/>
    <property type="molecule type" value="mRNA"/>
</dbReference>
<dbReference type="RefSeq" id="NP_001322092.1">
    <molecule id="Q9LR47-1"/>
    <property type="nucleotide sequence ID" value="NM_001331550.1"/>
</dbReference>
<dbReference type="RefSeq" id="NP_172038.4">
    <molecule id="Q9LR47-1"/>
    <property type="nucleotide sequence ID" value="NM_100426.5"/>
</dbReference>
<dbReference type="SMR" id="Q9LR47"/>
<dbReference type="BioGRID" id="22290">
    <property type="interactions" value="1"/>
</dbReference>
<dbReference type="FunCoup" id="Q9LR47">
    <property type="interactions" value="2928"/>
</dbReference>
<dbReference type="STRING" id="3702.Q9LR47"/>
<dbReference type="PaxDb" id="3702-AT1G05470.1"/>
<dbReference type="ProteomicsDB" id="228816">
    <molecule id="Q9LR47-1"/>
</dbReference>
<dbReference type="EnsemblPlants" id="AT1G05470.1">
    <molecule id="Q9LR47-1"/>
    <property type="protein sequence ID" value="AT1G05470.1"/>
    <property type="gene ID" value="AT1G05470"/>
</dbReference>
<dbReference type="EnsemblPlants" id="AT1G05470.2">
    <molecule id="Q9LR47-1"/>
    <property type="protein sequence ID" value="AT1G05470.2"/>
    <property type="gene ID" value="AT1G05470"/>
</dbReference>
<dbReference type="GeneID" id="837048"/>
<dbReference type="Gramene" id="AT1G05470.1">
    <molecule id="Q9LR47-1"/>
    <property type="protein sequence ID" value="AT1G05470.1"/>
    <property type="gene ID" value="AT1G05470"/>
</dbReference>
<dbReference type="Gramene" id="AT1G05470.2">
    <molecule id="Q9LR47-1"/>
    <property type="protein sequence ID" value="AT1G05470.2"/>
    <property type="gene ID" value="AT1G05470"/>
</dbReference>
<dbReference type="KEGG" id="ath:AT1G05470"/>
<dbReference type="Araport" id="AT1G05470"/>
<dbReference type="TAIR" id="AT1G05470">
    <property type="gene designation" value="CVP2"/>
</dbReference>
<dbReference type="eggNOG" id="KOG0565">
    <property type="taxonomic scope" value="Eukaryota"/>
</dbReference>
<dbReference type="HOGENOM" id="CLU_011711_4_0_1"/>
<dbReference type="InParanoid" id="Q9LR47"/>
<dbReference type="OMA" id="IPVPMAE"/>
<dbReference type="OrthoDB" id="62798at2759"/>
<dbReference type="PhylomeDB" id="Q9LR47"/>
<dbReference type="BioCyc" id="ARA:AT1G05470-MONOMER"/>
<dbReference type="PRO" id="PR:Q9LR47"/>
<dbReference type="Proteomes" id="UP000006548">
    <property type="component" value="Chromosome 1"/>
</dbReference>
<dbReference type="ExpressionAtlas" id="Q9LR47">
    <property type="expression patterns" value="baseline and differential"/>
</dbReference>
<dbReference type="GO" id="GO:0046030">
    <property type="term" value="F:inositol trisphosphate phosphatase activity"/>
    <property type="evidence" value="ECO:0000315"/>
    <property type="project" value="TAIR"/>
</dbReference>
<dbReference type="GO" id="GO:0004445">
    <property type="term" value="F:inositol-polyphosphate 5-phosphatase activity"/>
    <property type="evidence" value="ECO:0007669"/>
    <property type="project" value="InterPro"/>
</dbReference>
<dbReference type="GO" id="GO:0034485">
    <property type="term" value="F:phosphatidylinositol-3,4,5-trisphosphate 5-phosphatase activity"/>
    <property type="evidence" value="ECO:0000314"/>
    <property type="project" value="UniProtKB"/>
</dbReference>
<dbReference type="GO" id="GO:0004439">
    <property type="term" value="F:phosphatidylinositol-4,5-bisphosphate 5-phosphatase activity"/>
    <property type="evidence" value="ECO:0000314"/>
    <property type="project" value="UniProtKB"/>
</dbReference>
<dbReference type="GO" id="GO:0009738">
    <property type="term" value="P:abscisic acid-activated signaling pathway"/>
    <property type="evidence" value="ECO:0007669"/>
    <property type="project" value="UniProtKB-KW"/>
</dbReference>
<dbReference type="GO" id="GO:0030154">
    <property type="term" value="P:cell differentiation"/>
    <property type="evidence" value="ECO:0007669"/>
    <property type="project" value="UniProtKB-KW"/>
</dbReference>
<dbReference type="GO" id="GO:0010588">
    <property type="term" value="P:cotyledon vascular tissue pattern formation"/>
    <property type="evidence" value="ECO:0000315"/>
    <property type="project" value="TAIR"/>
</dbReference>
<dbReference type="GO" id="GO:0032957">
    <property type="term" value="P:inositol trisphosphate metabolic process"/>
    <property type="evidence" value="ECO:0000315"/>
    <property type="project" value="TAIR"/>
</dbReference>
<dbReference type="GO" id="GO:0010305">
    <property type="term" value="P:leaf vascular tissue pattern formation"/>
    <property type="evidence" value="ECO:0000315"/>
    <property type="project" value="TAIR"/>
</dbReference>
<dbReference type="GO" id="GO:0046856">
    <property type="term" value="P:phosphatidylinositol dephosphorylation"/>
    <property type="evidence" value="ECO:0000314"/>
    <property type="project" value="UniProtKB"/>
</dbReference>
<dbReference type="GO" id="GO:0010067">
    <property type="term" value="P:procambium histogenesis"/>
    <property type="evidence" value="ECO:0000315"/>
    <property type="project" value="TAIR"/>
</dbReference>
<dbReference type="GO" id="GO:0009737">
    <property type="term" value="P:response to abscisic acid"/>
    <property type="evidence" value="ECO:0000315"/>
    <property type="project" value="TAIR"/>
</dbReference>
<dbReference type="GO" id="GO:0010051">
    <property type="term" value="P:xylem and phloem pattern formation"/>
    <property type="evidence" value="ECO:0000315"/>
    <property type="project" value="TAIR"/>
</dbReference>
<dbReference type="FunFam" id="3.60.10.10:FF:000019">
    <property type="entry name" value="Type IV inositol polyphosphate 5-phosphatase 7"/>
    <property type="match status" value="1"/>
</dbReference>
<dbReference type="FunFam" id="3.60.10.10:FF:000023">
    <property type="entry name" value="Type IV inositol polyphosphate 5-phosphatase 7"/>
    <property type="match status" value="1"/>
</dbReference>
<dbReference type="Gene3D" id="3.60.10.10">
    <property type="entry name" value="Endonuclease/exonuclease/phosphatase"/>
    <property type="match status" value="2"/>
</dbReference>
<dbReference type="InterPro" id="IPR036691">
    <property type="entry name" value="Endo/exonu/phosph_ase_sf"/>
</dbReference>
<dbReference type="InterPro" id="IPR045849">
    <property type="entry name" value="IP5P_plant"/>
</dbReference>
<dbReference type="InterPro" id="IPR000300">
    <property type="entry name" value="IPPc"/>
</dbReference>
<dbReference type="PANTHER" id="PTHR45666:SF35">
    <property type="entry name" value="TYPE IV INOSITOL POLYPHOSPHATE 5-PHOSPHATASE 6"/>
    <property type="match status" value="1"/>
</dbReference>
<dbReference type="PANTHER" id="PTHR45666">
    <property type="entry name" value="TYPE IV INOSITOL POLYPHOSPHATE 5-PHOSPHATASE 9"/>
    <property type="match status" value="1"/>
</dbReference>
<dbReference type="Pfam" id="PF22669">
    <property type="entry name" value="Exo_endo_phos2"/>
    <property type="match status" value="2"/>
</dbReference>
<dbReference type="SMART" id="SM00128">
    <property type="entry name" value="IPPc"/>
    <property type="match status" value="1"/>
</dbReference>
<dbReference type="SUPFAM" id="SSF56219">
    <property type="entry name" value="DNase I-like"/>
    <property type="match status" value="2"/>
</dbReference>
<comment type="function">
    <text evidence="3 4 5 6 7">Has phosphatase activity toward PtdIns(4,5)P2 and PtdIns(3,4,5)P3 (PubMed:19473324). Required for the patterning of procambium and during the differentiation of vascular tissues. Acts before the acquisition of preprocambial identity. Seems to be also involved in the abscisic acid (ABA) signaling pathway (PubMed:10559439, PubMed:15100402). Acts redundantly with CVL1 for maintaining vascular continuity (PubMed:19363154, PubMed:25813544). Regulates phosphoinositide-dependent VAN3 localization (PubMed:19473324).</text>
</comment>
<comment type="catalytic activity">
    <reaction evidence="6">
        <text>a 1,2-diacyl-sn-glycero-3-phospho-(1D-myo-inositol-4,5-bisphosphate) + H2O = a 1,2-diacyl-sn-glycero-3-phospho-(1D-myo-inositol 4-phosphate) + phosphate</text>
        <dbReference type="Rhea" id="RHEA:22764"/>
        <dbReference type="ChEBI" id="CHEBI:15377"/>
        <dbReference type="ChEBI" id="CHEBI:43474"/>
        <dbReference type="ChEBI" id="CHEBI:58178"/>
        <dbReference type="ChEBI" id="CHEBI:58456"/>
        <dbReference type="EC" id="3.1.3.36"/>
    </reaction>
</comment>
<comment type="catalytic activity">
    <reaction evidence="6">
        <text>a 1,2-diacyl-sn-glycero-3-phospho-(1D-myo-inositol-3,4,5-trisphosphate) + H2O = a 1,2-diacyl-sn-glycero-3-phospho-(1D-myo-inositol-3,4-bisphosphate) + phosphate</text>
        <dbReference type="Rhea" id="RHEA:25528"/>
        <dbReference type="ChEBI" id="CHEBI:15377"/>
        <dbReference type="ChEBI" id="CHEBI:43474"/>
        <dbReference type="ChEBI" id="CHEBI:57658"/>
        <dbReference type="ChEBI" id="CHEBI:57836"/>
        <dbReference type="EC" id="3.1.3.86"/>
    </reaction>
</comment>
<comment type="alternative products">
    <event type="alternative splicing"/>
    <isoform>
        <id>Q9LR47-1</id>
        <name>1</name>
        <sequence type="displayed"/>
    </isoform>
    <isoform>
        <id>Q9LR47-2</id>
        <name>2</name>
        <sequence type="described" ref="VSP_037992 VSP_037993"/>
    </isoform>
</comment>
<comment type="tissue specificity">
    <text evidence="4 6">Broadly expressed in emerging organs. Mostly localized in procambium of growing organs. Restricted to vascular differentiating cells of young organs.</text>
</comment>
<comment type="developmental stage">
    <text evidence="4 6">During early stages of embryogenesis, broadly expressed throughout globular and torpedo stages. At late torpedo stage, strongly expressed in developing vascular cells and weakly expressed in surrounding cells. By the walking-stick stage, restricted to incipient vascular cells of the apical loop, the midvein of the cotyledon and the root vasculature. In emerging leaves, strongly expressed in procambium and weakly expressed in areole cells. Limited to developing vascular cells in later stage of leaf development. In roots, expressed in procambium of the elongating zone and in immature vascular cells of the root differentiation zone. During inflorescence development, broadly expressed in young floral buds, and gradually restricted to procambium of cauline leaves, sepals, petals, gynoecia and anthers.</text>
</comment>
<comment type="miscellaneous">
    <text evidence="7">CVP2 overexpression impairs protophloeme sieve element differentiation and overall root growth. Cvp1 and cvp2 double mutant displays high PtdIns(4,5)P2 levels.</text>
</comment>
<comment type="miscellaneous">
    <molecule>Isoform 2</molecule>
    <text evidence="9">May be due to a competing donor splice site.</text>
</comment>
<comment type="similarity">
    <text evidence="9">Belongs to the inositol polyphosphate 5-phosphatase family.</text>
</comment>
<comment type="sequence caution" evidence="9">
    <conflict type="erroneous gene model prediction">
        <sequence resource="EMBL-CDS" id="AAF79735"/>
    </conflict>
</comment>
<comment type="sequence caution" evidence="9">
    <conflict type="miscellaneous discrepancy">
        <sequence resource="EMBL" id="BX816898"/>
    </conflict>
    <text>Sequencing errors.</text>
</comment>
<sequence>MREEKSKTNKLAWSKKMVRKWFNIKSKTEEFQADDPSSAGIEVEHRSSFSAEKAPSTIKNTKTEKLSKNWEQQARQRRMNYENPRIIDVQNYSIFVATWNVAGRSPPSDLNLDEWLHSSAPADIYVLGFQEIVPLNAGNVLGAEDNGPAQKWLSLIRKTLNNRPGTSGTSGYHTPSPIPVPMAELDADFSGSTRQKNSTFFHRRSFQTPSSTWNDPSIPQPGLDRRFSVCDRVFFSHRPSDFDPSFRGSSSSHRPSDYSRRPSDYSRRPSDYSRRPSDYSRRPSDSRPSDYSRPSDYYSRPSDYSRPSDFSRSSDDDNGLGDSPSTVLYSPGSAANENGYRIPWNSSQYCLVASKQMVGVFLTIWVKSELREHVKNMKVSCVGRGLMGYLGNKGSISISMLLHQTSFCFVCTHLTSGQKEGDELKRNSDVMEILKKTRFPRVKSSEEEKSPENILQHDRVIWLGDLNYRIALSYRSAKALVEMQNWRALLENDQLRIEQKRGHVFKGWNEGKIYFPPTYKYSRNSDRYSGDDLHPKEKRRTPAWCDRILWFGEGLHQLSYVRGESRFSDHRPVYGIFCAEVESAHNRIKRTTSYSASRVQAEELLPYSRGYTELSFF</sequence>
<feature type="chain" id="PRO_0000209724" description="Type IV inositol polyphosphate 5-phosphatase 6">
    <location>
        <begin position="1"/>
        <end position="617"/>
    </location>
</feature>
<feature type="region of interest" description="Disordered" evidence="2">
    <location>
        <begin position="30"/>
        <end position="62"/>
    </location>
</feature>
<feature type="region of interest" description="Disordered" evidence="2">
    <location>
        <begin position="241"/>
        <end position="330"/>
    </location>
</feature>
<feature type="region of interest" description="Catalytic 1" evidence="1">
    <location>
        <begin position="458"/>
        <end position="473"/>
    </location>
</feature>
<feature type="region of interest" description="Catalytic 2" evidence="1">
    <location>
        <begin position="538"/>
        <end position="553"/>
    </location>
</feature>
<feature type="compositionally biased region" description="Low complexity" evidence="2">
    <location>
        <begin position="242"/>
        <end position="253"/>
    </location>
</feature>
<feature type="compositionally biased region" description="Basic and acidic residues" evidence="2">
    <location>
        <begin position="254"/>
        <end position="290"/>
    </location>
</feature>
<feature type="compositionally biased region" description="Low complexity" evidence="2">
    <location>
        <begin position="291"/>
        <end position="311"/>
    </location>
</feature>
<feature type="splice variant" id="VSP_037992" description="In isoform 2." evidence="9">
    <location>
        <begin position="1"/>
        <end position="111"/>
    </location>
</feature>
<feature type="splice variant" id="VSP_037993" description="In isoform 2." evidence="9">
    <original>LDEWLHSSAPADIYVLG</original>
    <variation>MSGFIHQLLLISMYSGI</variation>
    <location>
        <begin position="112"/>
        <end position="128"/>
    </location>
</feature>
<feature type="mutagenesis site" description="In cvp2-2; induces an open vein network." evidence="4">
    <original>A</original>
    <variation>V</variation>
    <location>
        <position position="543"/>
    </location>
</feature>
<feature type="mutagenesis site" description="In cvp2-1; induces an open vein network." evidence="4">
    <original>G</original>
    <variation>D</variation>
    <location>
        <position position="575"/>
    </location>
</feature>
<protein>
    <recommendedName>
        <fullName evidence="9">Type IV inositol polyphosphate 5-phosphatase 6</fullName>
        <shortName evidence="9">At5PTase6</shortName>
        <ecNumber evidence="6">3.1.3.36</ecNumber>
        <ecNumber evidence="6">3.1.3.86</ecNumber>
    </recommendedName>
    <alternativeName>
        <fullName evidence="8">Protein COTYLEDON VASCULAR PATTERN 2</fullName>
    </alternativeName>
</protein>
<organism>
    <name type="scientific">Arabidopsis thaliana</name>
    <name type="common">Mouse-ear cress</name>
    <dbReference type="NCBI Taxonomy" id="3702"/>
    <lineage>
        <taxon>Eukaryota</taxon>
        <taxon>Viridiplantae</taxon>
        <taxon>Streptophyta</taxon>
        <taxon>Embryophyta</taxon>
        <taxon>Tracheophyta</taxon>
        <taxon>Spermatophyta</taxon>
        <taxon>Magnoliopsida</taxon>
        <taxon>eudicotyledons</taxon>
        <taxon>Gunneridae</taxon>
        <taxon>Pentapetalae</taxon>
        <taxon>rosids</taxon>
        <taxon>malvids</taxon>
        <taxon>Brassicales</taxon>
        <taxon>Brassicaceae</taxon>
        <taxon>Camelineae</taxon>
        <taxon>Arabidopsis</taxon>
    </lineage>
</organism>
<evidence type="ECO:0000250" key="1">
    <source>
        <dbReference type="UniProtKB" id="Q84MA2"/>
    </source>
</evidence>
<evidence type="ECO:0000256" key="2">
    <source>
        <dbReference type="SAM" id="MobiDB-lite"/>
    </source>
</evidence>
<evidence type="ECO:0000269" key="3">
    <source>
    </source>
</evidence>
<evidence type="ECO:0000269" key="4">
    <source>
    </source>
</evidence>
<evidence type="ECO:0000269" key="5">
    <source>
    </source>
</evidence>
<evidence type="ECO:0000269" key="6">
    <source>
    </source>
</evidence>
<evidence type="ECO:0000269" key="7">
    <source>
    </source>
</evidence>
<evidence type="ECO:0000303" key="8">
    <source>
    </source>
</evidence>
<evidence type="ECO:0000305" key="9"/>
<evidence type="ECO:0000312" key="10">
    <source>
        <dbReference type="Araport" id="AT1G05470"/>
    </source>
</evidence>
<evidence type="ECO:0000312" key="11">
    <source>
        <dbReference type="EMBL" id="AAF79735.1"/>
    </source>
</evidence>
<keyword id="KW-0938">Abscisic acid signaling pathway</keyword>
<keyword id="KW-0025">Alternative splicing</keyword>
<keyword id="KW-0221">Differentiation</keyword>
<keyword id="KW-0378">Hydrolase</keyword>
<keyword id="KW-1185">Reference proteome</keyword>